<sequence>MSLQLEKNLILELIPHFYSLGWMKFGSGNFCLKNNGYAICVKDRVQRDFITENDIVTFNLSNQSVTKDLVNWAYIFSWVLSNMDAVACIYSTSVAAVGASMYNEKFTTQSKEMIKGIPKGNPSAGYLCCFDTLEVPIIHNGDSKTILDELKKVIELYPQTCAVLIRGHGVIGWGATWEKSKTQMECYEYLFELDYKLKTL</sequence>
<comment type="similarity">
    <text evidence="1">Belongs to the aldolase class II family. MtnB subfamily.</text>
</comment>
<comment type="caution">
    <text evidence="1">In contrast to other members of the family, it lacks the conserved zinc-binding residues.</text>
</comment>
<feature type="chain" id="PRO_0000315889" description="Methylthioribulose-1-phosphate dehydratase-like protein">
    <location>
        <begin position="1"/>
        <end position="200"/>
    </location>
</feature>
<reference key="1">
    <citation type="journal article" date="2002" name="Nature">
        <title>The genome sequence of Schizosaccharomyces pombe.</title>
        <authorList>
            <person name="Wood V."/>
            <person name="Gwilliam R."/>
            <person name="Rajandream M.A."/>
            <person name="Lyne M.H."/>
            <person name="Lyne R."/>
            <person name="Stewart A."/>
            <person name="Sgouros J.G."/>
            <person name="Peat N."/>
            <person name="Hayles J."/>
            <person name="Baker S.G."/>
            <person name="Basham D."/>
            <person name="Bowman S."/>
            <person name="Brooks K."/>
            <person name="Brown D."/>
            <person name="Brown S."/>
            <person name="Chillingworth T."/>
            <person name="Churcher C.M."/>
            <person name="Collins M."/>
            <person name="Connor R."/>
            <person name="Cronin A."/>
            <person name="Davis P."/>
            <person name="Feltwell T."/>
            <person name="Fraser A."/>
            <person name="Gentles S."/>
            <person name="Goble A."/>
            <person name="Hamlin N."/>
            <person name="Harris D.E."/>
            <person name="Hidalgo J."/>
            <person name="Hodgson G."/>
            <person name="Holroyd S."/>
            <person name="Hornsby T."/>
            <person name="Howarth S."/>
            <person name="Huckle E.J."/>
            <person name="Hunt S."/>
            <person name="Jagels K."/>
            <person name="James K.D."/>
            <person name="Jones L."/>
            <person name="Jones M."/>
            <person name="Leather S."/>
            <person name="McDonald S."/>
            <person name="McLean J."/>
            <person name="Mooney P."/>
            <person name="Moule S."/>
            <person name="Mungall K.L."/>
            <person name="Murphy L.D."/>
            <person name="Niblett D."/>
            <person name="Odell C."/>
            <person name="Oliver K."/>
            <person name="O'Neil S."/>
            <person name="Pearson D."/>
            <person name="Quail M.A."/>
            <person name="Rabbinowitsch E."/>
            <person name="Rutherford K.M."/>
            <person name="Rutter S."/>
            <person name="Saunders D."/>
            <person name="Seeger K."/>
            <person name="Sharp S."/>
            <person name="Skelton J."/>
            <person name="Simmonds M.N."/>
            <person name="Squares R."/>
            <person name="Squares S."/>
            <person name="Stevens K."/>
            <person name="Taylor K."/>
            <person name="Taylor R.G."/>
            <person name="Tivey A."/>
            <person name="Walsh S.V."/>
            <person name="Warren T."/>
            <person name="Whitehead S."/>
            <person name="Woodward J.R."/>
            <person name="Volckaert G."/>
            <person name="Aert R."/>
            <person name="Robben J."/>
            <person name="Grymonprez B."/>
            <person name="Weltjens I."/>
            <person name="Vanstreels E."/>
            <person name="Rieger M."/>
            <person name="Schaefer M."/>
            <person name="Mueller-Auer S."/>
            <person name="Gabel C."/>
            <person name="Fuchs M."/>
            <person name="Duesterhoeft A."/>
            <person name="Fritzc C."/>
            <person name="Holzer E."/>
            <person name="Moestl D."/>
            <person name="Hilbert H."/>
            <person name="Borzym K."/>
            <person name="Langer I."/>
            <person name="Beck A."/>
            <person name="Lehrach H."/>
            <person name="Reinhardt R."/>
            <person name="Pohl T.M."/>
            <person name="Eger P."/>
            <person name="Zimmermann W."/>
            <person name="Wedler H."/>
            <person name="Wambutt R."/>
            <person name="Purnelle B."/>
            <person name="Goffeau A."/>
            <person name="Cadieu E."/>
            <person name="Dreano S."/>
            <person name="Gloux S."/>
            <person name="Lelaure V."/>
            <person name="Mottier S."/>
            <person name="Galibert F."/>
            <person name="Aves S.J."/>
            <person name="Xiang Z."/>
            <person name="Hunt C."/>
            <person name="Moore K."/>
            <person name="Hurst S.M."/>
            <person name="Lucas M."/>
            <person name="Rochet M."/>
            <person name="Gaillardin C."/>
            <person name="Tallada V.A."/>
            <person name="Garzon A."/>
            <person name="Thode G."/>
            <person name="Daga R.R."/>
            <person name="Cruzado L."/>
            <person name="Jimenez J."/>
            <person name="Sanchez M."/>
            <person name="del Rey F."/>
            <person name="Benito J."/>
            <person name="Dominguez A."/>
            <person name="Revuelta J.L."/>
            <person name="Moreno S."/>
            <person name="Armstrong J."/>
            <person name="Forsburg S.L."/>
            <person name="Cerutti L."/>
            <person name="Lowe T."/>
            <person name="McCombie W.R."/>
            <person name="Paulsen I."/>
            <person name="Potashkin J."/>
            <person name="Shpakovski G.V."/>
            <person name="Ussery D."/>
            <person name="Barrell B.G."/>
            <person name="Nurse P."/>
        </authorList>
    </citation>
    <scope>NUCLEOTIDE SEQUENCE [LARGE SCALE GENOMIC DNA]</scope>
    <source>
        <strain>972 / ATCC 24843</strain>
    </source>
</reference>
<keyword id="KW-1185">Reference proteome</keyword>
<protein>
    <recommendedName>
        <fullName>Methylthioribulose-1-phosphate dehydratase-like protein</fullName>
    </recommendedName>
</protein>
<organism>
    <name type="scientific">Schizosaccharomyces pombe (strain 972 / ATCC 24843)</name>
    <name type="common">Fission yeast</name>
    <dbReference type="NCBI Taxonomy" id="284812"/>
    <lineage>
        <taxon>Eukaryota</taxon>
        <taxon>Fungi</taxon>
        <taxon>Dikarya</taxon>
        <taxon>Ascomycota</taxon>
        <taxon>Taphrinomycotina</taxon>
        <taxon>Schizosaccharomycetes</taxon>
        <taxon>Schizosaccharomycetales</taxon>
        <taxon>Schizosaccharomycetaceae</taxon>
        <taxon>Schizosaccharomyces</taxon>
    </lineage>
</organism>
<accession>Q9UT22</accession>
<gene>
    <name type="ORF">SPAC9.06c</name>
</gene>
<name>YFY6_SCHPO</name>
<proteinExistence type="inferred from homology"/>
<evidence type="ECO:0000305" key="1"/>
<dbReference type="EMBL" id="CU329670">
    <property type="protein sequence ID" value="CAB57424.2"/>
    <property type="molecule type" value="Genomic_DNA"/>
</dbReference>
<dbReference type="PIR" id="T39191">
    <property type="entry name" value="T39191"/>
</dbReference>
<dbReference type="RefSeq" id="NP_593349.2">
    <property type="nucleotide sequence ID" value="NM_001018781.3"/>
</dbReference>
<dbReference type="SMR" id="Q9UT22"/>
<dbReference type="FunCoup" id="Q9UT22">
    <property type="interactions" value="419"/>
</dbReference>
<dbReference type="STRING" id="284812.Q9UT22"/>
<dbReference type="PaxDb" id="4896-SPAC9.06c.1"/>
<dbReference type="EnsemblFungi" id="SPAC9.06c.1">
    <property type="protein sequence ID" value="SPAC9.06c.1:pep"/>
    <property type="gene ID" value="SPAC9.06c"/>
</dbReference>
<dbReference type="KEGG" id="spo:2543665"/>
<dbReference type="PomBase" id="SPAC9.06c"/>
<dbReference type="VEuPathDB" id="FungiDB:SPAC9.06c"/>
<dbReference type="eggNOG" id="KOG2631">
    <property type="taxonomic scope" value="Eukaryota"/>
</dbReference>
<dbReference type="HOGENOM" id="CLU_006033_4_0_1"/>
<dbReference type="InParanoid" id="Q9UT22"/>
<dbReference type="OMA" id="KTQMECY"/>
<dbReference type="PhylomeDB" id="Q9UT22"/>
<dbReference type="PRO" id="PR:Q9UT22"/>
<dbReference type="Proteomes" id="UP000002485">
    <property type="component" value="Chromosome I"/>
</dbReference>
<dbReference type="GO" id="GO:0005737">
    <property type="term" value="C:cytoplasm"/>
    <property type="evidence" value="ECO:0000318"/>
    <property type="project" value="GO_Central"/>
</dbReference>
<dbReference type="GO" id="GO:0046570">
    <property type="term" value="F:methylthioribulose 1-phosphate dehydratase activity"/>
    <property type="evidence" value="ECO:0000318"/>
    <property type="project" value="GO_Central"/>
</dbReference>
<dbReference type="GO" id="GO:0019509">
    <property type="term" value="P:L-methionine salvage from methylthioadenosine"/>
    <property type="evidence" value="ECO:0000318"/>
    <property type="project" value="GO_Central"/>
</dbReference>
<dbReference type="FunFam" id="3.40.225.10:FF:000003">
    <property type="entry name" value="Methylthioribulose-1-phosphate dehydratase"/>
    <property type="match status" value="1"/>
</dbReference>
<dbReference type="Gene3D" id="3.40.225.10">
    <property type="entry name" value="Class II aldolase/adducin N-terminal domain"/>
    <property type="match status" value="1"/>
</dbReference>
<dbReference type="InterPro" id="IPR001303">
    <property type="entry name" value="Aldolase_II/adducin_N"/>
</dbReference>
<dbReference type="InterPro" id="IPR036409">
    <property type="entry name" value="Aldolase_II/adducin_N_sf"/>
</dbReference>
<dbReference type="PANTHER" id="PTHR10640">
    <property type="entry name" value="METHYLTHIORIBULOSE-1-PHOSPHATE DEHYDRATASE"/>
    <property type="match status" value="1"/>
</dbReference>
<dbReference type="PANTHER" id="PTHR10640:SF10">
    <property type="entry name" value="METHYLTHIORIBULOSE-1-PHOSPHATE DEHYDRATASE-LIKE PROTEIN"/>
    <property type="match status" value="1"/>
</dbReference>
<dbReference type="Pfam" id="PF00596">
    <property type="entry name" value="Aldolase_II"/>
    <property type="match status" value="1"/>
</dbReference>
<dbReference type="SMART" id="SM01007">
    <property type="entry name" value="Aldolase_II"/>
    <property type="match status" value="1"/>
</dbReference>
<dbReference type="SUPFAM" id="SSF53639">
    <property type="entry name" value="AraD/HMP-PK domain-like"/>
    <property type="match status" value="1"/>
</dbReference>